<keyword id="KW-1003">Cell membrane</keyword>
<keyword id="KW-0472">Membrane</keyword>
<keyword id="KW-0653">Protein transport</keyword>
<keyword id="KW-1185">Reference proteome</keyword>
<keyword id="KW-0811">Translocation</keyword>
<keyword id="KW-0812">Transmembrane</keyword>
<keyword id="KW-1133">Transmembrane helix</keyword>
<keyword id="KW-0813">Transport</keyword>
<accession>C5A4H9</accession>
<organism>
    <name type="scientific">Thermococcus gammatolerans (strain DSM 15229 / JCM 11827 / EJ3)</name>
    <dbReference type="NCBI Taxonomy" id="593117"/>
    <lineage>
        <taxon>Archaea</taxon>
        <taxon>Methanobacteriati</taxon>
        <taxon>Methanobacteriota</taxon>
        <taxon>Thermococci</taxon>
        <taxon>Thermococcales</taxon>
        <taxon>Thermococcaceae</taxon>
        <taxon>Thermococcus</taxon>
    </lineage>
</organism>
<reference key="1">
    <citation type="journal article" date="2007" name="Genome Biol.">
        <title>Genome analysis and genome-wide proteomics of Thermococcus gammatolerans, the most radioresistant organism known amongst the Archaea.</title>
        <authorList>
            <person name="Zivanovic Y."/>
            <person name="Armengaud J."/>
            <person name="Lagorce A."/>
            <person name="Leplat C."/>
            <person name="Guerin P."/>
            <person name="Dutertre M."/>
            <person name="Anthouard V."/>
            <person name="Forterre P."/>
            <person name="Wincker P."/>
            <person name="Confalonieri F."/>
        </authorList>
    </citation>
    <scope>NUCLEOTIDE SEQUENCE [LARGE SCALE GENOMIC DNA]</scope>
    <source>
        <strain>DSM 15229 / JCM 11827 / EJ3</strain>
    </source>
</reference>
<comment type="function">
    <text evidence="1">Involved in protein export. The function of the beta subunit is unknown, but it may be involved in stabilization of the trimeric complex.</text>
</comment>
<comment type="subunit">
    <text evidence="1">Component of the protein translocase complex. Heterotrimer consisting of alpha (SecY), beta (SecG) and gamma (SecE) subunits. Can form oligomers of the heterotrimer.</text>
</comment>
<comment type="subcellular location">
    <subcellularLocation>
        <location evidence="1">Cell membrane</location>
        <topology evidence="1">Single-pass membrane protein</topology>
    </subcellularLocation>
</comment>
<comment type="similarity">
    <text evidence="1">Belongs to the SEC61-beta family.</text>
</comment>
<gene>
    <name evidence="1" type="primary">secG</name>
    <name type="ordered locus">TGAM_0639</name>
</gene>
<evidence type="ECO:0000255" key="1">
    <source>
        <dbReference type="HAMAP-Rule" id="MF_00751"/>
    </source>
</evidence>
<feature type="chain" id="PRO_1000212849" description="Preprotein translocase subunit SecG">
    <location>
        <begin position="1"/>
        <end position="56"/>
    </location>
</feature>
<feature type="topological domain" description="Cytoplasmic" evidence="1">
    <location>
        <begin position="1"/>
        <end position="29"/>
    </location>
</feature>
<feature type="transmembrane region" description="Helical" evidence="1">
    <location>
        <begin position="30"/>
        <end position="51"/>
    </location>
</feature>
<feature type="topological domain" description="Extracellular" evidence="1">
    <location>
        <begin position="52"/>
        <end position="56"/>
    </location>
</feature>
<name>SECG_THEGJ</name>
<proteinExistence type="inferred from homology"/>
<dbReference type="EMBL" id="CP001398">
    <property type="protein sequence ID" value="ACS33141.1"/>
    <property type="molecule type" value="Genomic_DNA"/>
</dbReference>
<dbReference type="RefSeq" id="WP_015858259.1">
    <property type="nucleotide sequence ID" value="NC_012804.1"/>
</dbReference>
<dbReference type="SMR" id="C5A4H9"/>
<dbReference type="PaxDb" id="593117-TGAM_0639"/>
<dbReference type="GeneID" id="7988853"/>
<dbReference type="KEGG" id="tga:TGAM_0639"/>
<dbReference type="PATRIC" id="fig|593117.10.peg.637"/>
<dbReference type="eggNOG" id="arCOG02957">
    <property type="taxonomic scope" value="Archaea"/>
</dbReference>
<dbReference type="HOGENOM" id="CLU_208205_3_1_2"/>
<dbReference type="OrthoDB" id="43651at2157"/>
<dbReference type="Proteomes" id="UP000001488">
    <property type="component" value="Chromosome"/>
</dbReference>
<dbReference type="GO" id="GO:0005886">
    <property type="term" value="C:plasma membrane"/>
    <property type="evidence" value="ECO:0007669"/>
    <property type="project" value="UniProtKB-SubCell"/>
</dbReference>
<dbReference type="GO" id="GO:0015031">
    <property type="term" value="P:protein transport"/>
    <property type="evidence" value="ECO:0007669"/>
    <property type="project" value="UniProtKB-UniRule"/>
</dbReference>
<dbReference type="HAMAP" id="MF_00751">
    <property type="entry name" value="SecG"/>
    <property type="match status" value="1"/>
</dbReference>
<dbReference type="InterPro" id="IPR023531">
    <property type="entry name" value="Preprot_translocase_SecG"/>
</dbReference>
<dbReference type="InterPro" id="IPR016482">
    <property type="entry name" value="SecG/Sec61-beta/Sbh"/>
</dbReference>
<dbReference type="NCBIfam" id="NF002318">
    <property type="entry name" value="PRK01253.1"/>
    <property type="match status" value="1"/>
</dbReference>
<dbReference type="Pfam" id="PF03911">
    <property type="entry name" value="Sec61_beta"/>
    <property type="match status" value="1"/>
</dbReference>
<sequence>MAKDKTTLPPTGAGLMRFFDEDTRAIKVSPKGVIAIVLVLIAFEVFLHLFGPSIFG</sequence>
<protein>
    <recommendedName>
        <fullName evidence="1">Preprotein translocase subunit SecG</fullName>
    </recommendedName>
    <alternativeName>
        <fullName evidence="1">Protein transport protein Sec61 subunit beta homolog</fullName>
    </alternativeName>
</protein>